<proteinExistence type="evidence at transcript level"/>
<accession>Q5XGE9</accession>
<name>LIPH_XENTR</name>
<evidence type="ECO:0000250" key="1"/>
<evidence type="ECO:0000250" key="2">
    <source>
        <dbReference type="UniProtKB" id="Q8WWY8"/>
    </source>
</evidence>
<evidence type="ECO:0000255" key="3"/>
<evidence type="ECO:0000305" key="4"/>
<protein>
    <recommendedName>
        <fullName>Lipase member H</fullName>
        <ecNumber>3.1.1.-</ecNumber>
    </recommendedName>
</protein>
<feature type="signal peptide" evidence="3">
    <location>
        <begin position="1"/>
        <end position="24"/>
    </location>
</feature>
<feature type="chain" id="PRO_0000273328" description="Lipase member H">
    <location>
        <begin position="25"/>
        <end position="460"/>
    </location>
</feature>
<feature type="active site" description="Nucleophile" evidence="1">
    <location>
        <position position="163"/>
    </location>
</feature>
<feature type="active site" description="Charge relay system" evidence="1">
    <location>
        <position position="187"/>
    </location>
</feature>
<feature type="active site" description="Charge relay system" evidence="1">
    <location>
        <position position="257"/>
    </location>
</feature>
<feature type="glycosylation site" description="N-linked (GlcNAc...) asparagine" evidence="3">
    <location>
        <position position="67"/>
    </location>
</feature>
<feature type="glycosylation site" description="N-linked (GlcNAc...) asparagine" evidence="3">
    <location>
        <position position="75"/>
    </location>
</feature>
<feature type="glycosylation site" description="N-linked (GlcNAc...) asparagine" evidence="3">
    <location>
        <position position="177"/>
    </location>
</feature>
<feature type="glycosylation site" description="N-linked (GlcNAc...) asparagine" evidence="3">
    <location>
        <position position="289"/>
    </location>
</feature>
<feature type="glycosylation site" description="N-linked (GlcNAc...) asparagine" evidence="3">
    <location>
        <position position="366"/>
    </location>
</feature>
<feature type="disulfide bond" evidence="1">
    <location>
        <begin position="242"/>
        <end position="255"/>
    </location>
</feature>
<feature type="disulfide bond" evidence="1">
    <location>
        <begin position="279"/>
        <end position="290"/>
    </location>
</feature>
<feature type="disulfide bond" evidence="1">
    <location>
        <begin position="293"/>
        <end position="301"/>
    </location>
</feature>
<feature type="disulfide bond" evidence="1">
    <location>
        <begin position="436"/>
        <end position="455"/>
    </location>
</feature>
<gene>
    <name type="primary">liph</name>
</gene>
<dbReference type="EC" id="3.1.1.-"/>
<dbReference type="EMBL" id="BC084493">
    <property type="protein sequence ID" value="AAH84493.1"/>
    <property type="molecule type" value="mRNA"/>
</dbReference>
<dbReference type="RefSeq" id="NP_001011098.1">
    <property type="nucleotide sequence ID" value="NM_001011098.1"/>
</dbReference>
<dbReference type="SMR" id="Q5XGE9"/>
<dbReference type="FunCoup" id="Q5XGE9">
    <property type="interactions" value="353"/>
</dbReference>
<dbReference type="ESTHER" id="xentr-q5xge9">
    <property type="family name" value="Phospholipase"/>
</dbReference>
<dbReference type="GlyCosmos" id="Q5XGE9">
    <property type="glycosylation" value="5 sites, No reported glycans"/>
</dbReference>
<dbReference type="PaxDb" id="8364-ENSXETP00000012870"/>
<dbReference type="DNASU" id="496511"/>
<dbReference type="GeneID" id="496511"/>
<dbReference type="KEGG" id="xtr:496511"/>
<dbReference type="AGR" id="Xenbase:XB-GENE-5847665"/>
<dbReference type="CTD" id="200879"/>
<dbReference type="Xenbase" id="XB-GENE-5847665">
    <property type="gene designation" value="liph"/>
</dbReference>
<dbReference type="eggNOG" id="ENOG502QUQT">
    <property type="taxonomic scope" value="Eukaryota"/>
</dbReference>
<dbReference type="InParanoid" id="Q5XGE9"/>
<dbReference type="OMA" id="DALHTDM"/>
<dbReference type="OrthoDB" id="199913at2759"/>
<dbReference type="Reactome" id="R-XTR-1483166">
    <property type="pathway name" value="Synthesis of PA"/>
</dbReference>
<dbReference type="Proteomes" id="UP000008143">
    <property type="component" value="Chromosome 2"/>
</dbReference>
<dbReference type="Bgee" id="ENSXETG00000005849">
    <property type="expression patterns" value="Expressed in egg cell and 8 other cell types or tissues"/>
</dbReference>
<dbReference type="GO" id="GO:0005576">
    <property type="term" value="C:extracellular region"/>
    <property type="evidence" value="ECO:0007669"/>
    <property type="project" value="UniProtKB-SubCell"/>
</dbReference>
<dbReference type="GO" id="GO:0005886">
    <property type="term" value="C:plasma membrane"/>
    <property type="evidence" value="ECO:0007669"/>
    <property type="project" value="UniProtKB-SubCell"/>
</dbReference>
<dbReference type="GO" id="GO:0052689">
    <property type="term" value="F:carboxylic ester hydrolase activity"/>
    <property type="evidence" value="ECO:0007669"/>
    <property type="project" value="InterPro"/>
</dbReference>
<dbReference type="GO" id="GO:0016298">
    <property type="term" value="F:lipase activity"/>
    <property type="evidence" value="ECO:0007669"/>
    <property type="project" value="InterPro"/>
</dbReference>
<dbReference type="GO" id="GO:0016042">
    <property type="term" value="P:lipid catabolic process"/>
    <property type="evidence" value="ECO:0007669"/>
    <property type="project" value="UniProtKB-KW"/>
</dbReference>
<dbReference type="CDD" id="cd00707">
    <property type="entry name" value="Pancreat_lipase_like"/>
    <property type="match status" value="1"/>
</dbReference>
<dbReference type="FunFam" id="3.40.50.1820:FF:000063">
    <property type="entry name" value="Lipase member H"/>
    <property type="match status" value="1"/>
</dbReference>
<dbReference type="Gene3D" id="3.40.50.1820">
    <property type="entry name" value="alpha/beta hydrolase"/>
    <property type="match status" value="1"/>
</dbReference>
<dbReference type="InterPro" id="IPR029058">
    <property type="entry name" value="AB_hydrolase_fold"/>
</dbReference>
<dbReference type="InterPro" id="IPR013818">
    <property type="entry name" value="Lipase"/>
</dbReference>
<dbReference type="InterPro" id="IPR016272">
    <property type="entry name" value="Lipase_LIPH"/>
</dbReference>
<dbReference type="InterPro" id="IPR033906">
    <property type="entry name" value="Lipase_N"/>
</dbReference>
<dbReference type="InterPro" id="IPR000734">
    <property type="entry name" value="TAG_lipase"/>
</dbReference>
<dbReference type="PANTHER" id="PTHR11610">
    <property type="entry name" value="LIPASE"/>
    <property type="match status" value="1"/>
</dbReference>
<dbReference type="PANTHER" id="PTHR11610:SF12">
    <property type="entry name" value="LIPASE MEMBER H"/>
    <property type="match status" value="1"/>
</dbReference>
<dbReference type="Pfam" id="PF00151">
    <property type="entry name" value="Lipase"/>
    <property type="match status" value="1"/>
</dbReference>
<dbReference type="PIRSF" id="PIRSF000865">
    <property type="entry name" value="Lipoprotein_lipase_LIPH"/>
    <property type="match status" value="1"/>
</dbReference>
<dbReference type="PRINTS" id="PR00821">
    <property type="entry name" value="TAGLIPASE"/>
</dbReference>
<dbReference type="SUPFAM" id="SSF53474">
    <property type="entry name" value="alpha/beta-Hydrolases"/>
    <property type="match status" value="1"/>
</dbReference>
<sequence>MLLRFYFNGLLFVGCLLSWGRSDTEEQCHTFTDLNIHNSIIGTGLKVQLLLYTRENPKCAQDLNVDNSTGFQYLNVTRRTVFITHGYRPTGSPPVWIDDIVKKFLDIQDFNVIVVDWNRGATTVLYHNAAANTRKVADILKRFIDNMLSQGATLDSIYMVGVSLGAHISGFVGKMYNGSIGRITGLDPAGPLFNGKPPEERLHYTDAQFVDVVHSDTDGLGYKESLGHIDFYPNGGTDQPGCPKTILAGSEYFKCDHQRSVFLYIASLTKSCDLVAFPCKSYRDYRIGNCTDCKEFLPLSCPVLGFYADKWKDHLVKRNHPGTTAFFDTAAKDPYCIFHYYLDFMTWSSQIRRGYITIKLTSLDGNVTESKLDKDAAVFEQYKEESLLAKFDQDMDPISRISVTFTTGSVIGPKYKLRVLRMRLRPFTNRNRPILCRYDFVLLENIETEFIPIPCEDTNL</sequence>
<comment type="function">
    <text evidence="2">Hydrolyzes specifically phosphatidic acid (PA) to produce 2-acyl lysophosphatidic acid (LPA; a potent bioactive lipid mediator) and fatty acid (By similarity). Does not hydrolyze other phospholipids, like phosphatidylserine (PS), phosphatidylcholine (PC) and phosphatidylethanolamine (PE) or triacylglycerol (TG) (By similarity).</text>
</comment>
<comment type="catalytic activity">
    <reaction evidence="2">
        <text>1-hexadecanoyl-2-(9Z-octadecenoyl)-sn-glycero-3-phosphate + H2O = 2-(9Z-octadecenoyl)-sn-glycero-3-phosphate + hexadecanoate + H(+)</text>
        <dbReference type="Rhea" id="RHEA:40943"/>
        <dbReference type="ChEBI" id="CHEBI:7896"/>
        <dbReference type="ChEBI" id="CHEBI:15377"/>
        <dbReference type="ChEBI" id="CHEBI:15378"/>
        <dbReference type="ChEBI" id="CHEBI:64839"/>
        <dbReference type="ChEBI" id="CHEBI:77593"/>
    </reaction>
    <physiologicalReaction direction="left-to-right" evidence="2">
        <dbReference type="Rhea" id="RHEA:40944"/>
    </physiologicalReaction>
</comment>
<comment type="subcellular location">
    <subcellularLocation>
        <location evidence="2">Secreted</location>
    </subcellularLocation>
    <subcellularLocation>
        <location evidence="2">Cell membrane</location>
        <topology>Peripheral membrane protein</topology>
    </subcellularLocation>
</comment>
<comment type="similarity">
    <text evidence="4">Belongs to the AB hydrolase superfamily. Lipase family.</text>
</comment>
<keyword id="KW-1003">Cell membrane</keyword>
<keyword id="KW-1015">Disulfide bond</keyword>
<keyword id="KW-0325">Glycoprotein</keyword>
<keyword id="KW-0378">Hydrolase</keyword>
<keyword id="KW-0442">Lipid degradation</keyword>
<keyword id="KW-0443">Lipid metabolism</keyword>
<keyword id="KW-0472">Membrane</keyword>
<keyword id="KW-1185">Reference proteome</keyword>
<keyword id="KW-0964">Secreted</keyword>
<keyword id="KW-0732">Signal</keyword>
<organism>
    <name type="scientific">Xenopus tropicalis</name>
    <name type="common">Western clawed frog</name>
    <name type="synonym">Silurana tropicalis</name>
    <dbReference type="NCBI Taxonomy" id="8364"/>
    <lineage>
        <taxon>Eukaryota</taxon>
        <taxon>Metazoa</taxon>
        <taxon>Chordata</taxon>
        <taxon>Craniata</taxon>
        <taxon>Vertebrata</taxon>
        <taxon>Euteleostomi</taxon>
        <taxon>Amphibia</taxon>
        <taxon>Batrachia</taxon>
        <taxon>Anura</taxon>
        <taxon>Pipoidea</taxon>
        <taxon>Pipidae</taxon>
        <taxon>Xenopodinae</taxon>
        <taxon>Xenopus</taxon>
        <taxon>Silurana</taxon>
    </lineage>
</organism>
<reference key="1">
    <citation type="submission" date="2004-10" db="EMBL/GenBank/DDBJ databases">
        <authorList>
            <consortium name="NIH - Xenopus Gene Collection (XGC) project"/>
        </authorList>
    </citation>
    <scope>NUCLEOTIDE SEQUENCE [LARGE SCALE MRNA]</scope>
    <source>
        <tissue>Embryo</tissue>
    </source>
</reference>